<gene>
    <name evidence="6" type="primary">LOS1</name>
    <name evidence="8" type="ordered locus">At1g56070/At1g56075</name>
    <name evidence="9" type="ORF">T6H22.13</name>
</gene>
<sequence length="843" mass="93891">MVKFTADELRRIMDYKHNIRNMSVIAHVDHGKSTLTDSLVAAAGIIAQEVAGDVRMTDTRADEAERGITIKSTGISLYYEMTDESLKSFTGARDGNEYLINLIDSPGHVDFSSEVTAALRITDGALVVVDCIEGVCVQTETVLRQALGERIRPVLTVNKMDRCFLELQVDGEEAYQTFSRVIENANVIMATYEDPLLGDVQVYPEKGTVAFSAGLHGWAFTLTNFAKMYASKFGVVESKMMERLWGENFFDPATRKWSGKNTGSPTCKRGFVQFCYEPIKQIIATCMNDQKDKLWPMLAKLGVSMKNDEKELMGKPLMKRVMQTWLPASTALLEMMIFHLPSPHTAQRYRVENLYEGPLDDQYANAIRNCDPNGPLMLYVSKMIPASDKGRFFAFGRVFAGKVSTGMKVRIMGPNYIPGEKKDLYTKSVQRTVIWMGKRQETVEDVPCGNTVAMVGLDQFITKNATLTNEKEVDAHPIRAMKFSVSPVVRVAVQCKVASDLPKLVEGLKRLAKSDPMVVCTMEESGEHIVAGAGELHLEICLKDLQDDFMGGAEIIKSDPVVSFRETVCDRSTRTVMSKSPNKHNRLYMEARPMEEGLAEAIDDGRIGPRDDPKIRSKILAEEFGWDKDLAKKIWAFGPETTGPNMVVDMCKGVQYLNEIKDSVVAGFQWASKEGPLAEENMRGICFEVCDVVLHSDAIHRGGGQVIPTARRVIYASQITAKPRLLEPVYMVEIQAPEGALGGIYSVLNQKRGHVFEEMQRPGTPLYNIKAYLPVVESFGFSSQLRAATSGQAFPQCVFDHWEMMSSDPLEPGTQASVLVADIRKRKGLKEAMTPLSEFEDKL</sequence>
<feature type="chain" id="PRO_0000435564" description="Elongation factor 2">
    <location>
        <begin position="1"/>
        <end position="843"/>
    </location>
</feature>
<feature type="domain" description="tr-type G" evidence="2">
    <location>
        <begin position="17"/>
        <end position="344"/>
    </location>
</feature>
<feature type="binding site" evidence="1">
    <location>
        <begin position="26"/>
        <end position="33"/>
    </location>
    <ligand>
        <name>GTP</name>
        <dbReference type="ChEBI" id="CHEBI:37565"/>
    </ligand>
</feature>
<feature type="binding site" evidence="1">
    <location>
        <begin position="158"/>
        <end position="161"/>
    </location>
    <ligand>
        <name>GTP</name>
        <dbReference type="ChEBI" id="CHEBI:37565"/>
    </ligand>
</feature>
<feature type="modified residue" description="Diphthamide" evidence="1">
    <location>
        <position position="700"/>
    </location>
</feature>
<feature type="modified residue" description="Phosphoserine" evidence="11 12">
    <location>
        <position position="837"/>
    </location>
</feature>
<feature type="splice variant" id="VSP_058113" description="In isoform 2.">
    <location>
        <begin position="50"/>
        <end position="664"/>
    </location>
</feature>
<feature type="splice variant" id="VSP_058114" description="In isoform 2.">
    <original>VLVADIRKRKG</original>
    <variation>FWWLISGRGRD</variation>
    <location>
        <begin position="818"/>
        <end position="828"/>
    </location>
</feature>
<feature type="splice variant" id="VSP_058115" description="In isoform 2.">
    <location>
        <begin position="829"/>
        <end position="843"/>
    </location>
</feature>
<reference key="1">
    <citation type="journal article" date="2000" name="Nature">
        <title>Sequence and analysis of chromosome 1 of the plant Arabidopsis thaliana.</title>
        <authorList>
            <person name="Theologis A."/>
            <person name="Ecker J.R."/>
            <person name="Palm C.J."/>
            <person name="Federspiel N.A."/>
            <person name="Kaul S."/>
            <person name="White O."/>
            <person name="Alonso J."/>
            <person name="Altafi H."/>
            <person name="Araujo R."/>
            <person name="Bowman C.L."/>
            <person name="Brooks S.Y."/>
            <person name="Buehler E."/>
            <person name="Chan A."/>
            <person name="Chao Q."/>
            <person name="Chen H."/>
            <person name="Cheuk R.F."/>
            <person name="Chin C.W."/>
            <person name="Chung M.K."/>
            <person name="Conn L."/>
            <person name="Conway A.B."/>
            <person name="Conway A.R."/>
            <person name="Creasy T.H."/>
            <person name="Dewar K."/>
            <person name="Dunn P."/>
            <person name="Etgu P."/>
            <person name="Feldblyum T.V."/>
            <person name="Feng J.-D."/>
            <person name="Fong B."/>
            <person name="Fujii C.Y."/>
            <person name="Gill J.E."/>
            <person name="Goldsmith A.D."/>
            <person name="Haas B."/>
            <person name="Hansen N.F."/>
            <person name="Hughes B."/>
            <person name="Huizar L."/>
            <person name="Hunter J.L."/>
            <person name="Jenkins J."/>
            <person name="Johnson-Hopson C."/>
            <person name="Khan S."/>
            <person name="Khaykin E."/>
            <person name="Kim C.J."/>
            <person name="Koo H.L."/>
            <person name="Kremenetskaia I."/>
            <person name="Kurtz D.B."/>
            <person name="Kwan A."/>
            <person name="Lam B."/>
            <person name="Langin-Hooper S."/>
            <person name="Lee A."/>
            <person name="Lee J.M."/>
            <person name="Lenz C.A."/>
            <person name="Li J.H."/>
            <person name="Li Y.-P."/>
            <person name="Lin X."/>
            <person name="Liu S.X."/>
            <person name="Liu Z.A."/>
            <person name="Luros J.S."/>
            <person name="Maiti R."/>
            <person name="Marziali A."/>
            <person name="Militscher J."/>
            <person name="Miranda M."/>
            <person name="Nguyen M."/>
            <person name="Nierman W.C."/>
            <person name="Osborne B.I."/>
            <person name="Pai G."/>
            <person name="Peterson J."/>
            <person name="Pham P.K."/>
            <person name="Rizzo M."/>
            <person name="Rooney T."/>
            <person name="Rowley D."/>
            <person name="Sakano H."/>
            <person name="Salzberg S.L."/>
            <person name="Schwartz J.R."/>
            <person name="Shinn P."/>
            <person name="Southwick A.M."/>
            <person name="Sun H."/>
            <person name="Tallon L.J."/>
            <person name="Tambunga G."/>
            <person name="Toriumi M.J."/>
            <person name="Town C.D."/>
            <person name="Utterback T."/>
            <person name="Van Aken S."/>
            <person name="Vaysberg M."/>
            <person name="Vysotskaia V.S."/>
            <person name="Walker M."/>
            <person name="Wu D."/>
            <person name="Yu G."/>
            <person name="Fraser C.M."/>
            <person name="Venter J.C."/>
            <person name="Davis R.W."/>
        </authorList>
    </citation>
    <scope>NUCLEOTIDE SEQUENCE [LARGE SCALE GENOMIC DNA]</scope>
    <source>
        <strain>cv. Columbia</strain>
    </source>
</reference>
<reference key="2">
    <citation type="journal article" date="2017" name="Plant J.">
        <title>Araport11: a complete reannotation of the Arabidopsis thaliana reference genome.</title>
        <authorList>
            <person name="Cheng C.Y."/>
            <person name="Krishnakumar V."/>
            <person name="Chan A.P."/>
            <person name="Thibaud-Nissen F."/>
            <person name="Schobel S."/>
            <person name="Town C.D."/>
        </authorList>
    </citation>
    <scope>GENOME REANNOTATION</scope>
    <source>
        <strain>cv. Columbia</strain>
    </source>
</reference>
<reference key="3">
    <citation type="journal article" date="2003" name="Science">
        <title>Empirical analysis of transcriptional activity in the Arabidopsis genome.</title>
        <authorList>
            <person name="Yamada K."/>
            <person name="Lim J."/>
            <person name="Dale J.M."/>
            <person name="Chen H."/>
            <person name="Shinn P."/>
            <person name="Palm C.J."/>
            <person name="Southwick A.M."/>
            <person name="Wu H.C."/>
            <person name="Kim C.J."/>
            <person name="Nguyen M."/>
            <person name="Pham P.K."/>
            <person name="Cheuk R.F."/>
            <person name="Karlin-Newmann G."/>
            <person name="Liu S.X."/>
            <person name="Lam B."/>
            <person name="Sakano H."/>
            <person name="Wu T."/>
            <person name="Yu G."/>
            <person name="Miranda M."/>
            <person name="Quach H.L."/>
            <person name="Tripp M."/>
            <person name="Chang C.H."/>
            <person name="Lee J.M."/>
            <person name="Toriumi M.J."/>
            <person name="Chan M.M."/>
            <person name="Tang C.C."/>
            <person name="Onodera C.S."/>
            <person name="Deng J.M."/>
            <person name="Akiyama K."/>
            <person name="Ansari Y."/>
            <person name="Arakawa T."/>
            <person name="Banh J."/>
            <person name="Banno F."/>
            <person name="Bowser L."/>
            <person name="Brooks S.Y."/>
            <person name="Carninci P."/>
            <person name="Chao Q."/>
            <person name="Choy N."/>
            <person name="Enju A."/>
            <person name="Goldsmith A.D."/>
            <person name="Gurjal M."/>
            <person name="Hansen N.F."/>
            <person name="Hayashizaki Y."/>
            <person name="Johnson-Hopson C."/>
            <person name="Hsuan V.W."/>
            <person name="Iida K."/>
            <person name="Karnes M."/>
            <person name="Khan S."/>
            <person name="Koesema E."/>
            <person name="Ishida J."/>
            <person name="Jiang P.X."/>
            <person name="Jones T."/>
            <person name="Kawai J."/>
            <person name="Kamiya A."/>
            <person name="Meyers C."/>
            <person name="Nakajima M."/>
            <person name="Narusaka M."/>
            <person name="Seki M."/>
            <person name="Sakurai T."/>
            <person name="Satou M."/>
            <person name="Tamse R."/>
            <person name="Vaysberg M."/>
            <person name="Wallender E.K."/>
            <person name="Wong C."/>
            <person name="Yamamura Y."/>
            <person name="Yuan S."/>
            <person name="Shinozaki K."/>
            <person name="Davis R.W."/>
            <person name="Theologis A."/>
            <person name="Ecker J.R."/>
        </authorList>
    </citation>
    <scope>NUCLEOTIDE SEQUENCE [LARGE SCALE MRNA] (ISOFORM 1)</scope>
    <source>
        <strain>cv. Columbia</strain>
    </source>
</reference>
<reference key="4">
    <citation type="journal article" date="2009" name="DNA Res.">
        <title>Analysis of multiple occurrences of alternative splicing events in Arabidopsis thaliana using novel sequenced full-length cDNAs.</title>
        <authorList>
            <person name="Iida K."/>
            <person name="Fukami-Kobayashi K."/>
            <person name="Toyoda A."/>
            <person name="Sakaki Y."/>
            <person name="Kobayashi M."/>
            <person name="Seki M."/>
            <person name="Shinozaki K."/>
        </authorList>
    </citation>
    <scope>NUCLEOTIDE SEQUENCE [LARGE SCALE MRNA] (ISOFORM 2)</scope>
    <source>
        <strain>cv. Columbia</strain>
        <tissue>Root</tissue>
    </source>
</reference>
<reference key="5">
    <citation type="submission" date="2005-03" db="EMBL/GenBank/DDBJ databases">
        <title>Large-scale analysis of RIKEN Arabidopsis full-length (RAFL) cDNAs.</title>
        <authorList>
            <person name="Totoki Y."/>
            <person name="Seki M."/>
            <person name="Ishida J."/>
            <person name="Nakajima M."/>
            <person name="Enju A."/>
            <person name="Kamiya A."/>
            <person name="Narusaka M."/>
            <person name="Shin-i T."/>
            <person name="Nakagawa M."/>
            <person name="Sakamoto N."/>
            <person name="Oishi K."/>
            <person name="Kohara Y."/>
            <person name="Kobayashi M."/>
            <person name="Toyoda A."/>
            <person name="Sakaki Y."/>
            <person name="Sakurai T."/>
            <person name="Iida K."/>
            <person name="Akiyama K."/>
            <person name="Satou M."/>
            <person name="Toyoda T."/>
            <person name="Konagaya A."/>
            <person name="Carninci P."/>
            <person name="Kawai J."/>
            <person name="Hayashizaki Y."/>
            <person name="Shinozaki K."/>
        </authorList>
    </citation>
    <scope>NUCLEOTIDE SEQUENCE [LARGE SCALE MRNA] OF 269-843 (ISOFORM 1)</scope>
    <source>
        <strain>cv. Columbia</strain>
    </source>
</reference>
<reference key="6">
    <citation type="journal article" date="1997" name="Plant Cell">
        <title>Genetic analysis of osmotic and cold stress signal transduction in Arabidopsis: interactions and convergence of abscisic acid-dependent and abscisic acid-independent pathways.</title>
        <authorList>
            <person name="Ishitani M."/>
            <person name="Xiong L."/>
            <person name="Stevenson B."/>
            <person name="Zhu J.-K."/>
        </authorList>
    </citation>
    <scope>FUNCTION</scope>
    <scope>DISRUPTION PHENOTYPE</scope>
    <source>
        <strain>cv. C24</strain>
    </source>
</reference>
<reference key="7">
    <citation type="journal article" date="2002" name="Proc. Natl. Acad. Sci. U.S.A.">
        <title>An Arabidopsis mutation in translation elongation factor 2 causes superinduction of CBF/DREB1 transcription factor genes but blocks the induction of their downstream targets under low temperatures.</title>
        <authorList>
            <person name="Guo Y."/>
            <person name="Xiong L."/>
            <person name="Ishitani M."/>
            <person name="Zhu J.-K."/>
        </authorList>
    </citation>
    <scope>FUNCTION</scope>
    <scope>DISRUPTION PHENOTYPE</scope>
    <scope>TISSUE SPECIFICITY</scope>
    <scope>INDUCTION BY COLD</scope>
    <source>
        <strain>cv. C24</strain>
    </source>
</reference>
<reference key="8">
    <citation type="journal article" date="2005" name="Antioxid. Redox Signal.">
        <title>Identification of plant glutaredoxin targets.</title>
        <authorList>
            <person name="Rouhier N."/>
            <person name="Villarejo A."/>
            <person name="Srivastava M."/>
            <person name="Gelhaye E."/>
            <person name="Keech O."/>
            <person name="Droux M."/>
            <person name="Finkemeier I."/>
            <person name="Samuelsson G."/>
            <person name="Dietz K.J."/>
            <person name="Jacquot J.P."/>
            <person name="Wingsle G."/>
        </authorList>
    </citation>
    <scope>INTERACTION WITH GLUTAREDOXINS</scope>
</reference>
<reference key="9">
    <citation type="journal article" date="2008" name="J. Proteome Res.">
        <title>Site-specific phosphorylation profiling of Arabidopsis proteins by mass spectrometry and peptide chip analysis.</title>
        <authorList>
            <person name="de la Fuente van Bentem S."/>
            <person name="Anrather D."/>
            <person name="Dohnal I."/>
            <person name="Roitinger E."/>
            <person name="Csaszar E."/>
            <person name="Joore J."/>
            <person name="Buijnink J."/>
            <person name="Carreri A."/>
            <person name="Forzani C."/>
            <person name="Lorkovic Z.J."/>
            <person name="Barta A."/>
            <person name="Lecourieux D."/>
            <person name="Verhounig A."/>
            <person name="Jonak C."/>
            <person name="Hirt H."/>
        </authorList>
    </citation>
    <scope>PHOSPHORYLATION [LARGE SCALE ANALYSIS] AT SER-837</scope>
    <scope>IDENTIFICATION BY MASS SPECTROMETRY [LARGE SCALE ANALYSIS]</scope>
    <source>
        <tissue>Root</tissue>
    </source>
</reference>
<reference key="10">
    <citation type="journal article" date="2009" name="J. Proteomics">
        <title>Phosphoproteomic analysis of nuclei-enriched fractions from Arabidopsis thaliana.</title>
        <authorList>
            <person name="Jones A.M.E."/>
            <person name="MacLean D."/>
            <person name="Studholme D.J."/>
            <person name="Serna-Sanz A."/>
            <person name="Andreasson E."/>
            <person name="Rathjen J.P."/>
            <person name="Peck S.C."/>
        </authorList>
    </citation>
    <scope>PHOSPHORYLATION [LARGE SCALE ANALYSIS] AT SER-837</scope>
    <scope>IDENTIFICATION BY MASS SPECTROMETRY [LARGE SCALE ANALYSIS]</scope>
    <source>
        <strain>cv. Columbia</strain>
    </source>
</reference>
<protein>
    <recommendedName>
        <fullName evidence="7">Elongation factor 2</fullName>
        <shortName evidence="7">EF-2</shortName>
        <ecNumber evidence="1">3.6.5.-</ecNumber>
    </recommendedName>
    <alternativeName>
        <fullName evidence="6">Protein LOW EXPRESSION OF OSMOTICALLY RESPONSIVE GENES 1</fullName>
    </alternativeName>
</protein>
<organism evidence="10">
    <name type="scientific">Arabidopsis thaliana</name>
    <name type="common">Mouse-ear cress</name>
    <dbReference type="NCBI Taxonomy" id="3702"/>
    <lineage>
        <taxon>Eukaryota</taxon>
        <taxon>Viridiplantae</taxon>
        <taxon>Streptophyta</taxon>
        <taxon>Embryophyta</taxon>
        <taxon>Tracheophyta</taxon>
        <taxon>Spermatophyta</taxon>
        <taxon>Magnoliopsida</taxon>
        <taxon>eudicotyledons</taxon>
        <taxon>Gunneridae</taxon>
        <taxon>Pentapetalae</taxon>
        <taxon>rosids</taxon>
        <taxon>malvids</taxon>
        <taxon>Brassicales</taxon>
        <taxon>Brassicaceae</taxon>
        <taxon>Camelineae</taxon>
        <taxon>Arabidopsis</taxon>
    </lineage>
</organism>
<keyword id="KW-0025">Alternative splicing</keyword>
<keyword id="KW-0963">Cytoplasm</keyword>
<keyword id="KW-0251">Elongation factor</keyword>
<keyword id="KW-0342">GTP-binding</keyword>
<keyword id="KW-0378">Hydrolase</keyword>
<keyword id="KW-0547">Nucleotide-binding</keyword>
<keyword id="KW-0597">Phosphoprotein</keyword>
<keyword id="KW-0648">Protein biosynthesis</keyword>
<keyword id="KW-1185">Reference proteome</keyword>
<proteinExistence type="evidence at protein level"/>
<evidence type="ECO:0000250" key="1">
    <source>
        <dbReference type="UniProtKB" id="P32324"/>
    </source>
</evidence>
<evidence type="ECO:0000255" key="2">
    <source>
        <dbReference type="PROSITE-ProRule" id="PRU01059"/>
    </source>
</evidence>
<evidence type="ECO:0000269" key="3">
    <source>
    </source>
</evidence>
<evidence type="ECO:0000269" key="4">
    <source>
    </source>
</evidence>
<evidence type="ECO:0000269" key="5">
    <source>
    </source>
</evidence>
<evidence type="ECO:0000303" key="6">
    <source>
    </source>
</evidence>
<evidence type="ECO:0000305" key="7"/>
<evidence type="ECO:0000312" key="8">
    <source>
        <dbReference type="Araport" id="AT1G56070"/>
    </source>
</evidence>
<evidence type="ECO:0000312" key="9">
    <source>
        <dbReference type="EMBL" id="AAF02837.1"/>
    </source>
</evidence>
<evidence type="ECO:0000312" key="10">
    <source>
        <dbReference type="EMBL" id="AAK32918.1"/>
    </source>
</evidence>
<evidence type="ECO:0007744" key="11">
    <source>
    </source>
</evidence>
<evidence type="ECO:0007744" key="12">
    <source>
    </source>
</evidence>
<comment type="function">
    <text evidence="1 3 5">Catalyzes the GTP-dependent ribosomal translocation step during translation elongation. During this step, the ribosome changes from the pre-translocational (PRE) to the post-translocational (POST) state as the newly formed A-site-bound peptidyl-tRNA and P-site-bound deacylated tRNA move to the P and E sites, respectively. Catalyzes the coordinated movement of the two tRNA molecules, the mRNA and conformational changes in the ribosome (By similarity). Involved in cold responses leading to freezing tolerance via the induction of cold-responsive genes (PubMed:12032361, PubMed:9401119).</text>
</comment>
<comment type="catalytic activity">
    <reaction evidence="1">
        <text>GTP + H2O = GDP + phosphate + H(+)</text>
        <dbReference type="Rhea" id="RHEA:19669"/>
        <dbReference type="ChEBI" id="CHEBI:15377"/>
        <dbReference type="ChEBI" id="CHEBI:15378"/>
        <dbReference type="ChEBI" id="CHEBI:37565"/>
        <dbReference type="ChEBI" id="CHEBI:43474"/>
        <dbReference type="ChEBI" id="CHEBI:58189"/>
    </reaction>
    <physiologicalReaction direction="left-to-right" evidence="1">
        <dbReference type="Rhea" id="RHEA:19670"/>
    </physiologicalReaction>
</comment>
<comment type="pathway">
    <text evidence="1">Protein biosynthesis; polypeptide chain elongation.</text>
</comment>
<comment type="subunit">
    <text evidence="4">May interact with glutaredoxins (Grxs).</text>
</comment>
<comment type="subcellular location">
    <subcellularLocation>
        <location evidence="1">Cytoplasm</location>
    </subcellularLocation>
</comment>
<comment type="alternative products">
    <event type="alternative splicing"/>
    <isoform>
        <id>Q9ASR1-1</id>
        <name>1</name>
        <sequence type="displayed"/>
    </isoform>
    <isoform>
        <id>Q9ASR1-2</id>
        <name>2</name>
        <sequence type="described" ref="VSP_058113 VSP_058114 VSP_058115"/>
    </isoform>
</comment>
<comment type="tissue specificity">
    <text evidence="3">Expressed in root, stem, leaves, flowers and siliques.</text>
</comment>
<comment type="induction">
    <text evidence="3">Induced by cold.</text>
</comment>
<comment type="disruption phenotype">
    <text evidence="3 5">Blocks specifically low temperature-induced transcription of cold-responsive genes such as RD29A (PubMed:12032361, PubMed:9401119). Reduced capacity to develop freezing tolerance but does not impair the vernalization response. Defective in protein synthesis in the cold (PubMed:12032361).</text>
</comment>
<comment type="similarity">
    <text evidence="2">Belongs to the TRAFAC class translation factor GTPase superfamily. Classic translation factor GTPase family.</text>
</comment>
<comment type="sequence caution" evidence="7">
    <conflict type="erroneous gene model prediction">
        <sequence resource="EMBL-CDS" id="AAF02837"/>
    </conflict>
</comment>
<comment type="sequence caution" evidence="7">
    <conflict type="erroneous initiation">
        <sequence resource="EMBL-CDS" id="BAD94254"/>
    </conflict>
    <text>Truncated N-terminus.</text>
</comment>
<comment type="sequence caution" evidence="7">
    <conflict type="erroneous initiation">
        <sequence resource="EMBL-CDS" id="BAD94268"/>
    </conflict>
    <text>Truncated N-terminus.</text>
</comment>
<dbReference type="EC" id="3.6.5.-" evidence="1"/>
<dbReference type="EMBL" id="AC009894">
    <property type="protein sequence ID" value="AAF02837.1"/>
    <property type="status" value="ALT_SEQ"/>
    <property type="molecule type" value="Genomic_DNA"/>
</dbReference>
<dbReference type="EMBL" id="CP002684">
    <property type="protein sequence ID" value="AEE33338.1"/>
    <property type="molecule type" value="Genomic_DNA"/>
</dbReference>
<dbReference type="EMBL" id="CP002684">
    <property type="protein sequence ID" value="ANM58611.1"/>
    <property type="molecule type" value="Genomic_DNA"/>
</dbReference>
<dbReference type="EMBL" id="CP002684">
    <property type="protein sequence ID" value="ANM58612.1"/>
    <property type="molecule type" value="Genomic_DNA"/>
</dbReference>
<dbReference type="EMBL" id="AF367331">
    <property type="protein sequence ID" value="AAK32918.1"/>
    <property type="molecule type" value="mRNA"/>
</dbReference>
<dbReference type="EMBL" id="AY035011">
    <property type="protein sequence ID" value="AAK59516.2"/>
    <property type="molecule type" value="mRNA"/>
</dbReference>
<dbReference type="EMBL" id="AY054461">
    <property type="protein sequence ID" value="AAK96653.1"/>
    <property type="molecule type" value="mRNA"/>
</dbReference>
<dbReference type="EMBL" id="BT000661">
    <property type="protein sequence ID" value="AAN31808.1"/>
    <property type="molecule type" value="mRNA"/>
</dbReference>
<dbReference type="EMBL" id="BT000722">
    <property type="protein sequence ID" value="AAN31864.1"/>
    <property type="molecule type" value="mRNA"/>
</dbReference>
<dbReference type="EMBL" id="BT000786">
    <property type="protein sequence ID" value="AAN31925.1"/>
    <property type="molecule type" value="mRNA"/>
</dbReference>
<dbReference type="EMBL" id="BT002714">
    <property type="protein sequence ID" value="AAO11630.1"/>
    <property type="molecule type" value="mRNA"/>
</dbReference>
<dbReference type="EMBL" id="BT006187">
    <property type="protein sequence ID" value="AAP04170.1"/>
    <property type="molecule type" value="mRNA"/>
</dbReference>
<dbReference type="EMBL" id="AK319019">
    <property type="protein sequence ID" value="BAH57134.1"/>
    <property type="molecule type" value="mRNA"/>
</dbReference>
<dbReference type="EMBL" id="AK220706">
    <property type="protein sequence ID" value="BAD93810.1"/>
    <property type="molecule type" value="mRNA"/>
</dbReference>
<dbReference type="EMBL" id="AK221896">
    <property type="protein sequence ID" value="BAD94254.1"/>
    <property type="status" value="ALT_INIT"/>
    <property type="molecule type" value="mRNA"/>
</dbReference>
<dbReference type="EMBL" id="AK221900">
    <property type="protein sequence ID" value="BAD94268.1"/>
    <property type="status" value="ALT_INIT"/>
    <property type="molecule type" value="mRNA"/>
</dbReference>
<dbReference type="PIR" id="A96602">
    <property type="entry name" value="A96602"/>
</dbReference>
<dbReference type="RefSeq" id="NP_001321033.1">
    <molecule id="Q9ASR1-1"/>
    <property type="nucleotide sequence ID" value="NM_001333759.1"/>
</dbReference>
<dbReference type="RefSeq" id="NP_001321034.1">
    <molecule id="Q9ASR1-1"/>
    <property type="nucleotide sequence ID" value="NM_001333760.1"/>
</dbReference>
<dbReference type="RefSeq" id="NP_849818.1">
    <molecule id="Q9ASR1-1"/>
    <property type="nucleotide sequence ID" value="NM_179487.2"/>
</dbReference>
<dbReference type="SMR" id="Q9ASR1"/>
<dbReference type="FunCoup" id="Q9ASR1">
    <property type="interactions" value="3626"/>
</dbReference>
<dbReference type="IntAct" id="Q9ASR1">
    <property type="interactions" value="2"/>
</dbReference>
<dbReference type="MINT" id="Q9ASR1"/>
<dbReference type="STRING" id="3702.Q9ASR1"/>
<dbReference type="iPTMnet" id="Q9ASR1"/>
<dbReference type="MetOSite" id="Q9ASR1"/>
<dbReference type="SwissPalm" id="Q9ASR1"/>
<dbReference type="PaxDb" id="3702-AT1G56070.1"/>
<dbReference type="ProMEX" id="Q9ASR1"/>
<dbReference type="ProteomicsDB" id="247078">
    <molecule id="Q9ASR1-1"/>
</dbReference>
<dbReference type="EnsemblPlants" id="AT1G56070.1">
    <molecule id="Q9ASR1-1"/>
    <property type="protein sequence ID" value="AT1G56070.1"/>
    <property type="gene ID" value="AT1G56070"/>
</dbReference>
<dbReference type="EnsemblPlants" id="AT1G56070.2">
    <molecule id="Q9ASR1-1"/>
    <property type="protein sequence ID" value="AT1G56070.2"/>
    <property type="gene ID" value="AT1G56070"/>
</dbReference>
<dbReference type="EnsemblPlants" id="AT1G56070.3">
    <molecule id="Q9ASR1-1"/>
    <property type="protein sequence ID" value="AT1G56070.3"/>
    <property type="gene ID" value="AT1G56070"/>
</dbReference>
<dbReference type="GeneID" id="842058"/>
<dbReference type="Gramene" id="AT1G56070.1">
    <molecule id="Q9ASR1-1"/>
    <property type="protein sequence ID" value="AT1G56070.1"/>
    <property type="gene ID" value="AT1G56070"/>
</dbReference>
<dbReference type="Gramene" id="AT1G56070.2">
    <molecule id="Q9ASR1-1"/>
    <property type="protein sequence ID" value="AT1G56070.2"/>
    <property type="gene ID" value="AT1G56070"/>
</dbReference>
<dbReference type="Gramene" id="AT1G56070.3">
    <molecule id="Q9ASR1-1"/>
    <property type="protein sequence ID" value="AT1G56070.3"/>
    <property type="gene ID" value="AT1G56070"/>
</dbReference>
<dbReference type="KEGG" id="ath:AT1G56070"/>
<dbReference type="Araport" id="AT1G56070"/>
<dbReference type="TAIR" id="AT1G56070">
    <property type="gene designation" value="LOS1"/>
</dbReference>
<dbReference type="eggNOG" id="KOG0469">
    <property type="taxonomic scope" value="Eukaryota"/>
</dbReference>
<dbReference type="HOGENOM" id="CLU_002794_11_2_1"/>
<dbReference type="InParanoid" id="Q9ASR1"/>
<dbReference type="OMA" id="ASWNTEN"/>
<dbReference type="OrthoDB" id="1031882at2759"/>
<dbReference type="PhylomeDB" id="Q9ASR1"/>
<dbReference type="UniPathway" id="UPA00345"/>
<dbReference type="CD-CODE" id="4299E36E">
    <property type="entry name" value="Nucleolus"/>
</dbReference>
<dbReference type="PRO" id="PR:Q9ASR1"/>
<dbReference type="Proteomes" id="UP000006548">
    <property type="component" value="Chromosome 1"/>
</dbReference>
<dbReference type="ExpressionAtlas" id="Q9ASR1">
    <property type="expression patterns" value="baseline and differential"/>
</dbReference>
<dbReference type="GO" id="GO:0009507">
    <property type="term" value="C:chloroplast"/>
    <property type="evidence" value="ECO:0007005"/>
    <property type="project" value="TAIR"/>
</dbReference>
<dbReference type="GO" id="GO:0005829">
    <property type="term" value="C:cytosol"/>
    <property type="evidence" value="ECO:0007005"/>
    <property type="project" value="TAIR"/>
</dbReference>
<dbReference type="GO" id="GO:0005730">
    <property type="term" value="C:nucleolus"/>
    <property type="evidence" value="ECO:0007005"/>
    <property type="project" value="TAIR"/>
</dbReference>
<dbReference type="GO" id="GO:0005634">
    <property type="term" value="C:nucleus"/>
    <property type="evidence" value="ECO:0007005"/>
    <property type="project" value="TAIR"/>
</dbReference>
<dbReference type="GO" id="GO:0000325">
    <property type="term" value="C:plant-type vacuole"/>
    <property type="evidence" value="ECO:0007005"/>
    <property type="project" value="TAIR"/>
</dbReference>
<dbReference type="GO" id="GO:0005886">
    <property type="term" value="C:plasma membrane"/>
    <property type="evidence" value="ECO:0007005"/>
    <property type="project" value="TAIR"/>
</dbReference>
<dbReference type="GO" id="GO:0009506">
    <property type="term" value="C:plasmodesma"/>
    <property type="evidence" value="ECO:0007005"/>
    <property type="project" value="TAIR"/>
</dbReference>
<dbReference type="GO" id="GO:0005507">
    <property type="term" value="F:copper ion binding"/>
    <property type="evidence" value="ECO:0007005"/>
    <property type="project" value="TAIR"/>
</dbReference>
<dbReference type="GO" id="GO:0005525">
    <property type="term" value="F:GTP binding"/>
    <property type="evidence" value="ECO:0007669"/>
    <property type="project" value="UniProtKB-KW"/>
</dbReference>
<dbReference type="GO" id="GO:0003924">
    <property type="term" value="F:GTPase activity"/>
    <property type="evidence" value="ECO:0007669"/>
    <property type="project" value="InterPro"/>
</dbReference>
<dbReference type="GO" id="GO:0003729">
    <property type="term" value="F:mRNA binding"/>
    <property type="evidence" value="ECO:0000314"/>
    <property type="project" value="TAIR"/>
</dbReference>
<dbReference type="GO" id="GO:0003746">
    <property type="term" value="F:translation elongation factor activity"/>
    <property type="evidence" value="ECO:0007669"/>
    <property type="project" value="UniProtKB-KW"/>
</dbReference>
<dbReference type="GO" id="GO:0009631">
    <property type="term" value="P:cold acclimation"/>
    <property type="evidence" value="ECO:0000315"/>
    <property type="project" value="UniProtKB"/>
</dbReference>
<dbReference type="GO" id="GO:0009409">
    <property type="term" value="P:response to cold"/>
    <property type="evidence" value="ECO:0000315"/>
    <property type="project" value="UniProtKB"/>
</dbReference>
<dbReference type="CDD" id="cd01681">
    <property type="entry name" value="aeEF2_snRNP_like_IV"/>
    <property type="match status" value="1"/>
</dbReference>
<dbReference type="CDD" id="cd04096">
    <property type="entry name" value="eEF2_snRNP_like_C"/>
    <property type="match status" value="1"/>
</dbReference>
<dbReference type="CDD" id="cd01885">
    <property type="entry name" value="EF2"/>
    <property type="match status" value="1"/>
</dbReference>
<dbReference type="CDD" id="cd16268">
    <property type="entry name" value="EF2_II"/>
    <property type="match status" value="1"/>
</dbReference>
<dbReference type="CDD" id="cd16261">
    <property type="entry name" value="EF2_snRNP_III"/>
    <property type="match status" value="1"/>
</dbReference>
<dbReference type="FunFam" id="2.40.30.10:FF:000010">
    <property type="entry name" value="Translation elongation factor 2"/>
    <property type="match status" value="1"/>
</dbReference>
<dbReference type="FunFam" id="3.30.230.10:FF:000006">
    <property type="entry name" value="Translation elongation factor 2"/>
    <property type="match status" value="1"/>
</dbReference>
<dbReference type="FunFam" id="3.30.70.240:FF:000003">
    <property type="entry name" value="Translation elongation factor 2"/>
    <property type="match status" value="1"/>
</dbReference>
<dbReference type="FunFam" id="3.30.70.870:FF:000002">
    <property type="entry name" value="Translation elongation factor 2"/>
    <property type="match status" value="1"/>
</dbReference>
<dbReference type="FunFam" id="3.40.50.300:FF:000058">
    <property type="entry name" value="Translation elongation factor 2"/>
    <property type="match status" value="1"/>
</dbReference>
<dbReference type="Gene3D" id="3.30.230.10">
    <property type="match status" value="1"/>
</dbReference>
<dbReference type="Gene3D" id="3.30.70.240">
    <property type="match status" value="1"/>
</dbReference>
<dbReference type="Gene3D" id="3.30.70.870">
    <property type="entry name" value="Elongation Factor G (Translational Gtpase), domain 3"/>
    <property type="match status" value="1"/>
</dbReference>
<dbReference type="Gene3D" id="3.40.50.300">
    <property type="entry name" value="P-loop containing nucleotide triphosphate hydrolases"/>
    <property type="match status" value="1"/>
</dbReference>
<dbReference type="Gene3D" id="2.40.30.10">
    <property type="entry name" value="Translation factors"/>
    <property type="match status" value="1"/>
</dbReference>
<dbReference type="InterPro" id="IPR041095">
    <property type="entry name" value="EFG_II"/>
</dbReference>
<dbReference type="InterPro" id="IPR035647">
    <property type="entry name" value="EFG_III/V"/>
</dbReference>
<dbReference type="InterPro" id="IPR000640">
    <property type="entry name" value="EFG_V-like"/>
</dbReference>
<dbReference type="InterPro" id="IPR004161">
    <property type="entry name" value="EFTu-like_2"/>
</dbReference>
<dbReference type="InterPro" id="IPR031157">
    <property type="entry name" value="G_TR_CS"/>
</dbReference>
<dbReference type="InterPro" id="IPR027417">
    <property type="entry name" value="P-loop_NTPase"/>
</dbReference>
<dbReference type="InterPro" id="IPR020568">
    <property type="entry name" value="Ribosomal_Su5_D2-typ_SF"/>
</dbReference>
<dbReference type="InterPro" id="IPR014721">
    <property type="entry name" value="Ribsml_uS5_D2-typ_fold_subgr"/>
</dbReference>
<dbReference type="InterPro" id="IPR005225">
    <property type="entry name" value="Small_GTP-bd"/>
</dbReference>
<dbReference type="InterPro" id="IPR000795">
    <property type="entry name" value="T_Tr_GTP-bd_dom"/>
</dbReference>
<dbReference type="InterPro" id="IPR009000">
    <property type="entry name" value="Transl_B-barrel_sf"/>
</dbReference>
<dbReference type="InterPro" id="IPR005517">
    <property type="entry name" value="Transl_elong_EFG/EF2_IV"/>
</dbReference>
<dbReference type="NCBIfam" id="TIGR00231">
    <property type="entry name" value="small_GTP"/>
    <property type="match status" value="1"/>
</dbReference>
<dbReference type="PANTHER" id="PTHR42908:SF42">
    <property type="entry name" value="ELONGATION FACTOR 2-RELATED"/>
    <property type="match status" value="1"/>
</dbReference>
<dbReference type="PANTHER" id="PTHR42908">
    <property type="entry name" value="TRANSLATION ELONGATION FACTOR-RELATED"/>
    <property type="match status" value="1"/>
</dbReference>
<dbReference type="Pfam" id="PF00679">
    <property type="entry name" value="EFG_C"/>
    <property type="match status" value="1"/>
</dbReference>
<dbReference type="Pfam" id="PF14492">
    <property type="entry name" value="EFG_III"/>
    <property type="match status" value="1"/>
</dbReference>
<dbReference type="Pfam" id="PF03764">
    <property type="entry name" value="EFG_IV"/>
    <property type="match status" value="1"/>
</dbReference>
<dbReference type="Pfam" id="PF00009">
    <property type="entry name" value="GTP_EFTU"/>
    <property type="match status" value="1"/>
</dbReference>
<dbReference type="Pfam" id="PF03144">
    <property type="entry name" value="GTP_EFTU_D2"/>
    <property type="match status" value="1"/>
</dbReference>
<dbReference type="PRINTS" id="PR00315">
    <property type="entry name" value="ELONGATNFCT"/>
</dbReference>
<dbReference type="SMART" id="SM00838">
    <property type="entry name" value="EFG_C"/>
    <property type="match status" value="1"/>
</dbReference>
<dbReference type="SMART" id="SM00889">
    <property type="entry name" value="EFG_IV"/>
    <property type="match status" value="1"/>
</dbReference>
<dbReference type="SUPFAM" id="SSF54980">
    <property type="entry name" value="EF-G C-terminal domain-like"/>
    <property type="match status" value="2"/>
</dbReference>
<dbReference type="SUPFAM" id="SSF52540">
    <property type="entry name" value="P-loop containing nucleoside triphosphate hydrolases"/>
    <property type="match status" value="1"/>
</dbReference>
<dbReference type="SUPFAM" id="SSF54211">
    <property type="entry name" value="Ribosomal protein S5 domain 2-like"/>
    <property type="match status" value="1"/>
</dbReference>
<dbReference type="SUPFAM" id="SSF50447">
    <property type="entry name" value="Translation proteins"/>
    <property type="match status" value="1"/>
</dbReference>
<dbReference type="PROSITE" id="PS00301">
    <property type="entry name" value="G_TR_1"/>
    <property type="match status" value="1"/>
</dbReference>
<dbReference type="PROSITE" id="PS51722">
    <property type="entry name" value="G_TR_2"/>
    <property type="match status" value="1"/>
</dbReference>
<name>EF2_ARATH</name>
<accession>Q9ASR1</accession>
<accession>C0Z355</accession>
<accession>Q56WX9</accession>
<accession>Q56WY3</accession>
<accession>Q570K2</accession>
<accession>Q84R07</accession>
<accession>Q8H145</accession>
<accession>Q94CA4</accession>
<accession>Q9SGT4</accession>